<dbReference type="EMBL" id="AAFI02000006">
    <property type="protein sequence ID" value="EAL71538.1"/>
    <property type="molecule type" value="Genomic_DNA"/>
</dbReference>
<dbReference type="EMBL" id="M15967">
    <property type="protein sequence ID" value="AAA33220.1"/>
    <property type="molecule type" value="Genomic_DNA"/>
</dbReference>
<dbReference type="PIR" id="B26720">
    <property type="entry name" value="B26720"/>
</dbReference>
<dbReference type="RefSeq" id="XP_645467.1">
    <property type="nucleotide sequence ID" value="XM_640375.1"/>
</dbReference>
<dbReference type="SMR" id="P18154"/>
<dbReference type="PaxDb" id="44689-DDB0220023"/>
<dbReference type="EnsemblProtists" id="EAL71538">
    <property type="protein sequence ID" value="EAL71538"/>
    <property type="gene ID" value="DDB_G0271696"/>
</dbReference>
<dbReference type="GeneID" id="8618095"/>
<dbReference type="KEGG" id="ddi:DDB_G0271696"/>
<dbReference type="dictyBase" id="DDB_G0271696">
    <property type="gene designation" value="prtA"/>
</dbReference>
<dbReference type="VEuPathDB" id="AmoebaDB:DDB_G0271696"/>
<dbReference type="HOGENOM" id="CLU_531497_0_0_1"/>
<dbReference type="InParanoid" id="P18154"/>
<dbReference type="PhylomeDB" id="P18154"/>
<dbReference type="PRO" id="PR:P18154"/>
<dbReference type="Proteomes" id="UP000002195">
    <property type="component" value="Chromosome 2"/>
</dbReference>
<dbReference type="GO" id="GO:0090729">
    <property type="term" value="F:toxin activity"/>
    <property type="evidence" value="ECO:0007669"/>
    <property type="project" value="InterPro"/>
</dbReference>
<dbReference type="Gene3D" id="1.20.190.10">
    <property type="entry name" value="Pesticidal crystal protein, N-terminal domain"/>
    <property type="match status" value="1"/>
</dbReference>
<dbReference type="InterPro" id="IPR036716">
    <property type="entry name" value="Pest_crys_N_sf"/>
</dbReference>
<dbReference type="PANTHER" id="PTHR37514">
    <property type="entry name" value="N-TERMINAL DELTA ENDOTOXIN DOMAIN-CONTAINING PROTEIN-RELATED"/>
    <property type="match status" value="1"/>
</dbReference>
<dbReference type="PANTHER" id="PTHR37514:SF1">
    <property type="entry name" value="N-TERMINAL DELTA ENDOTOXIN DOMAIN-CONTAINING PROTEIN-RELATED"/>
    <property type="match status" value="1"/>
</dbReference>
<dbReference type="SUPFAM" id="SSF56849">
    <property type="entry name" value="delta-Endotoxin (insectocide), N-terminal domain"/>
    <property type="match status" value="1"/>
</dbReference>
<evidence type="ECO:0000305" key="1"/>
<name>M3L_DICDI</name>
<reference key="1">
    <citation type="journal article" date="2002" name="Nature">
        <title>Sequence and analysis of chromosome 2 of Dictyostelium discoideum.</title>
        <authorList>
            <person name="Gloeckner G."/>
            <person name="Eichinger L."/>
            <person name="Szafranski K."/>
            <person name="Pachebat J.A."/>
            <person name="Bankier A.T."/>
            <person name="Dear P.H."/>
            <person name="Lehmann R."/>
            <person name="Baumgart C."/>
            <person name="Parra G."/>
            <person name="Abril J.F."/>
            <person name="Guigo R."/>
            <person name="Kumpf K."/>
            <person name="Tunggal B."/>
            <person name="Cox E.C."/>
            <person name="Quail M.A."/>
            <person name="Platzer M."/>
            <person name="Rosenthal A."/>
            <person name="Noegel A.A."/>
        </authorList>
    </citation>
    <scope>NUCLEOTIDE SEQUENCE [LARGE SCALE GENOMIC DNA]</scope>
    <source>
        <strain>AX4</strain>
    </source>
</reference>
<reference key="2">
    <citation type="journal article" date="2005" name="Nature">
        <title>The genome of the social amoeba Dictyostelium discoideum.</title>
        <authorList>
            <person name="Eichinger L."/>
            <person name="Pachebat J.A."/>
            <person name="Gloeckner G."/>
            <person name="Rajandream M.A."/>
            <person name="Sucgang R."/>
            <person name="Berriman M."/>
            <person name="Song J."/>
            <person name="Olsen R."/>
            <person name="Szafranski K."/>
            <person name="Xu Q."/>
            <person name="Tunggal B."/>
            <person name="Kummerfeld S."/>
            <person name="Madera M."/>
            <person name="Konfortov B.A."/>
            <person name="Rivero F."/>
            <person name="Bankier A.T."/>
            <person name="Lehmann R."/>
            <person name="Hamlin N."/>
            <person name="Davies R."/>
            <person name="Gaudet P."/>
            <person name="Fey P."/>
            <person name="Pilcher K."/>
            <person name="Chen G."/>
            <person name="Saunders D."/>
            <person name="Sodergren E.J."/>
            <person name="Davis P."/>
            <person name="Kerhornou A."/>
            <person name="Nie X."/>
            <person name="Hall N."/>
            <person name="Anjard C."/>
            <person name="Hemphill L."/>
            <person name="Bason N."/>
            <person name="Farbrother P."/>
            <person name="Desany B."/>
            <person name="Just E."/>
            <person name="Morio T."/>
            <person name="Rost R."/>
            <person name="Churcher C.M."/>
            <person name="Cooper J."/>
            <person name="Haydock S."/>
            <person name="van Driessche N."/>
            <person name="Cronin A."/>
            <person name="Goodhead I."/>
            <person name="Muzny D.M."/>
            <person name="Mourier T."/>
            <person name="Pain A."/>
            <person name="Lu M."/>
            <person name="Harper D."/>
            <person name="Lindsay R."/>
            <person name="Hauser H."/>
            <person name="James K.D."/>
            <person name="Quiles M."/>
            <person name="Madan Babu M."/>
            <person name="Saito T."/>
            <person name="Buchrieser C."/>
            <person name="Wardroper A."/>
            <person name="Felder M."/>
            <person name="Thangavelu M."/>
            <person name="Johnson D."/>
            <person name="Knights A."/>
            <person name="Loulseged H."/>
            <person name="Mungall K.L."/>
            <person name="Oliver K."/>
            <person name="Price C."/>
            <person name="Quail M.A."/>
            <person name="Urushihara H."/>
            <person name="Hernandez J."/>
            <person name="Rabbinowitsch E."/>
            <person name="Steffen D."/>
            <person name="Sanders M."/>
            <person name="Ma J."/>
            <person name="Kohara Y."/>
            <person name="Sharp S."/>
            <person name="Simmonds M.N."/>
            <person name="Spiegler S."/>
            <person name="Tivey A."/>
            <person name="Sugano S."/>
            <person name="White B."/>
            <person name="Walker D."/>
            <person name="Woodward J.R."/>
            <person name="Winckler T."/>
            <person name="Tanaka Y."/>
            <person name="Shaulsky G."/>
            <person name="Schleicher M."/>
            <person name="Weinstock G.M."/>
            <person name="Rosenthal A."/>
            <person name="Cox E.C."/>
            <person name="Chisholm R.L."/>
            <person name="Gibbs R.A."/>
            <person name="Loomis W.F."/>
            <person name="Platzer M."/>
            <person name="Kay R.R."/>
            <person name="Williams J.G."/>
            <person name="Dear P.H."/>
            <person name="Noegel A.A."/>
            <person name="Barrell B.G."/>
            <person name="Kuspa A."/>
        </authorList>
    </citation>
    <scope>NUCLEOTIDE SEQUENCE [LARGE SCALE GENOMIC DNA]</scope>
    <source>
        <strain>AX4</strain>
    </source>
</reference>
<reference key="3">
    <citation type="journal article" date="1987" name="Mol. Cell. Biol.">
        <title>Cyclic AMP regulation of early gene expression in Dictyostelium discoideum: mediation via the cell surface cyclic AMP receptor.</title>
        <authorList>
            <person name="Mann S.K.O."/>
            <person name="Firtel R.A."/>
        </authorList>
    </citation>
    <scope>NUCLEOTIDE SEQUENCE [GENOMIC DNA] OF 1-256</scope>
    <source>
        <strain>NC-4</strain>
    </source>
</reference>
<protein>
    <recommendedName>
        <fullName>cAMP-regulated M3L protein</fullName>
    </recommendedName>
    <alternativeName>
        <fullName>Proteasomal alpha-subunit M3</fullName>
    </alternativeName>
</protein>
<comment type="induction">
    <text>Stimulation by changing levels of cAMP via the cell surface cAMP receptor.</text>
</comment>
<comment type="similarity">
    <text evidence="1">To D.discoideum protein M3R.</text>
</comment>
<sequence>MESLKNNDERIENFLNELKNLQSNIDKDIKEFSNSPNTSNAEKDGKFLSKHDEELYNKQIIRLTQEDRISNLSSLINSNIEDSFLLAYQTILNNLPGVGPVFQMIFGIMGNGIDLEKFYKEIIAQVEKMIKKSLEDYFKNQCNIIFNNLGKACDQHKELTQKWYDNHGIRSMNHLGEEIPQSSSTIESDETLTPMIHASYLDLKMKFNDALTYFTDSKYRGHVAPLLTYTSVMYFAFLRDILKYGKEMKFDNSIIDGTANTPGIKKISNDFVNKSLSEFLKSGVEYTKVVNSLQEGEWQTYPPPIGRVWVPPVPIEWVSPPATSLALKFFLANTDNYPKGGKVVKVTNGYYELSPIKMTYALEVYYSSGHGYSVNYYPSYRFGGKPILPLIAPVVNTLFTMLNPNRFSRTFKIRITHKIVREAKWNLDFFDNEVGEAGSFNQKFVFTSTTSHINPICDKSETAGVTEIPGPFTTDKKYIRLTCIRKFNLQEPKNEGYAYGSSIFSVELIDL</sequence>
<feature type="chain" id="PRO_0000084540" description="cAMP-regulated M3L protein">
    <location>
        <begin position="1"/>
        <end position="511"/>
    </location>
</feature>
<feature type="sequence conflict" description="In Ref. 3; AAA33220." evidence="1" ref="3">
    <original>Y</original>
    <variation>N</variation>
    <location>
        <position position="88"/>
    </location>
</feature>
<feature type="sequence conflict" description="In Ref. 3; AAA33220." evidence="1" ref="3">
    <original>G</original>
    <variation>W</variation>
    <location>
        <position position="97"/>
    </location>
</feature>
<feature type="sequence conflict" description="In Ref. 3; AAA33220." evidence="1" ref="3">
    <original>A</original>
    <variation>T</variation>
    <location>
        <position position="124"/>
    </location>
</feature>
<feature type="sequence conflict" description="In Ref. 3; AAA33220." evidence="1" ref="3">
    <original>K</original>
    <variation>Q</variation>
    <location>
        <position position="128"/>
    </location>
</feature>
<feature type="sequence conflict" description="In Ref. 3; AAA33220." evidence="1" ref="3">
    <original>F</original>
    <variation>Y</variation>
    <location>
        <position position="138"/>
    </location>
</feature>
<feature type="sequence conflict" description="In Ref. 3; AAA33220." evidence="1" ref="3">
    <original>T</original>
    <variation>S</variation>
    <location>
        <position position="185"/>
    </location>
</feature>
<organism>
    <name type="scientific">Dictyostelium discoideum</name>
    <name type="common">Social amoeba</name>
    <dbReference type="NCBI Taxonomy" id="44689"/>
    <lineage>
        <taxon>Eukaryota</taxon>
        <taxon>Amoebozoa</taxon>
        <taxon>Evosea</taxon>
        <taxon>Eumycetozoa</taxon>
        <taxon>Dictyostelia</taxon>
        <taxon>Dictyosteliales</taxon>
        <taxon>Dictyosteliaceae</taxon>
        <taxon>Dictyostelium</taxon>
    </lineage>
</organism>
<accession>P18154</accession>
<accession>Q55AQ5</accession>
<accession>Q75JB1</accession>
<gene>
    <name type="primary">prtA</name>
    <name type="synonym">M3L</name>
    <name type="ORF">DDB_G0271696</name>
</gene>
<proteinExistence type="evidence at transcript level"/>
<keyword id="KW-0114">cAMP</keyword>
<keyword id="KW-1185">Reference proteome</keyword>